<proteinExistence type="inferred from homology"/>
<organism>
    <name type="scientific">Stenotrophomonas maltophilia (strain K279a)</name>
    <dbReference type="NCBI Taxonomy" id="522373"/>
    <lineage>
        <taxon>Bacteria</taxon>
        <taxon>Pseudomonadati</taxon>
        <taxon>Pseudomonadota</taxon>
        <taxon>Gammaproteobacteria</taxon>
        <taxon>Lysobacterales</taxon>
        <taxon>Lysobacteraceae</taxon>
        <taxon>Stenotrophomonas</taxon>
        <taxon>Stenotrophomonas maltophilia group</taxon>
    </lineage>
</organism>
<sequence>MEITASLVKELRERTGAGMMECKKALTEANGDIDAAAEAMRKSGAAKADKKADRVAAEGRLGLAQDGGKAVLVEVNSETDFVANDDNFKSFVNAVAAAALASGATDVEAVKAAKLADGRTVEEARATAVQTLGENIQIRRMVNVDTTGNIGAYVHTNGKVGVLVDLIGGDVELARGLAMHVAALKPPHNKAADVPADFVEKEKEIELAKMSEKDKAKPADILEKIISGKINKIVSDVTLYGQTYVLGDTTVEQVVKAAGADVAGFKLLIVGEGIEKVVEDYAAEVAKAMQV</sequence>
<accession>B2FIA8</accession>
<keyword id="KW-0963">Cytoplasm</keyword>
<keyword id="KW-0251">Elongation factor</keyword>
<keyword id="KW-0648">Protein biosynthesis</keyword>
<keyword id="KW-1185">Reference proteome</keyword>
<protein>
    <recommendedName>
        <fullName evidence="1">Elongation factor Ts</fullName>
        <shortName evidence="1">EF-Ts</shortName>
    </recommendedName>
</protein>
<feature type="chain" id="PRO_1000189875" description="Elongation factor Ts">
    <location>
        <begin position="1"/>
        <end position="291"/>
    </location>
</feature>
<feature type="region of interest" description="Involved in Mg(2+) ion dislocation from EF-Tu" evidence="1">
    <location>
        <begin position="79"/>
        <end position="82"/>
    </location>
</feature>
<gene>
    <name evidence="1" type="primary">tsf</name>
    <name type="ordered locus">Smlt1506</name>
</gene>
<evidence type="ECO:0000255" key="1">
    <source>
        <dbReference type="HAMAP-Rule" id="MF_00050"/>
    </source>
</evidence>
<comment type="function">
    <text evidence="1">Associates with the EF-Tu.GDP complex and induces the exchange of GDP to GTP. It remains bound to the aminoacyl-tRNA.EF-Tu.GTP complex up to the GTP hydrolysis stage on the ribosome.</text>
</comment>
<comment type="subcellular location">
    <subcellularLocation>
        <location evidence="1">Cytoplasm</location>
    </subcellularLocation>
</comment>
<comment type="similarity">
    <text evidence="1">Belongs to the EF-Ts family.</text>
</comment>
<dbReference type="EMBL" id="AM743169">
    <property type="protein sequence ID" value="CAQ45042.1"/>
    <property type="molecule type" value="Genomic_DNA"/>
</dbReference>
<dbReference type="RefSeq" id="WP_005408747.1">
    <property type="nucleotide sequence ID" value="NC_010943.1"/>
</dbReference>
<dbReference type="SMR" id="B2FIA8"/>
<dbReference type="EnsemblBacteria" id="CAQ45042">
    <property type="protein sequence ID" value="CAQ45042"/>
    <property type="gene ID" value="Smlt1506"/>
</dbReference>
<dbReference type="GeneID" id="93832684"/>
<dbReference type="KEGG" id="sml:Smlt1506"/>
<dbReference type="eggNOG" id="COG0264">
    <property type="taxonomic scope" value="Bacteria"/>
</dbReference>
<dbReference type="HOGENOM" id="CLU_047155_0_0_6"/>
<dbReference type="Proteomes" id="UP000008840">
    <property type="component" value="Chromosome"/>
</dbReference>
<dbReference type="GO" id="GO:0005737">
    <property type="term" value="C:cytoplasm"/>
    <property type="evidence" value="ECO:0007669"/>
    <property type="project" value="UniProtKB-SubCell"/>
</dbReference>
<dbReference type="GO" id="GO:0003746">
    <property type="term" value="F:translation elongation factor activity"/>
    <property type="evidence" value="ECO:0007669"/>
    <property type="project" value="UniProtKB-UniRule"/>
</dbReference>
<dbReference type="CDD" id="cd14275">
    <property type="entry name" value="UBA_EF-Ts"/>
    <property type="match status" value="1"/>
</dbReference>
<dbReference type="FunFam" id="1.10.286.20:FF:000001">
    <property type="entry name" value="Elongation factor Ts"/>
    <property type="match status" value="1"/>
</dbReference>
<dbReference type="FunFam" id="1.10.8.10:FF:000001">
    <property type="entry name" value="Elongation factor Ts"/>
    <property type="match status" value="1"/>
</dbReference>
<dbReference type="Gene3D" id="1.10.286.20">
    <property type="match status" value="1"/>
</dbReference>
<dbReference type="Gene3D" id="1.10.8.10">
    <property type="entry name" value="DNA helicase RuvA subunit, C-terminal domain"/>
    <property type="match status" value="1"/>
</dbReference>
<dbReference type="Gene3D" id="3.30.479.20">
    <property type="entry name" value="Elongation factor Ts, dimerisation domain"/>
    <property type="match status" value="2"/>
</dbReference>
<dbReference type="HAMAP" id="MF_00050">
    <property type="entry name" value="EF_Ts"/>
    <property type="match status" value="1"/>
</dbReference>
<dbReference type="InterPro" id="IPR036402">
    <property type="entry name" value="EF-Ts_dimer_sf"/>
</dbReference>
<dbReference type="InterPro" id="IPR001816">
    <property type="entry name" value="Transl_elong_EFTs/EF1B"/>
</dbReference>
<dbReference type="InterPro" id="IPR014039">
    <property type="entry name" value="Transl_elong_EFTs/EF1B_dimer"/>
</dbReference>
<dbReference type="InterPro" id="IPR018101">
    <property type="entry name" value="Transl_elong_Ts_CS"/>
</dbReference>
<dbReference type="InterPro" id="IPR009060">
    <property type="entry name" value="UBA-like_sf"/>
</dbReference>
<dbReference type="NCBIfam" id="TIGR00116">
    <property type="entry name" value="tsf"/>
    <property type="match status" value="1"/>
</dbReference>
<dbReference type="PANTHER" id="PTHR11741">
    <property type="entry name" value="ELONGATION FACTOR TS"/>
    <property type="match status" value="1"/>
</dbReference>
<dbReference type="PANTHER" id="PTHR11741:SF0">
    <property type="entry name" value="ELONGATION FACTOR TS, MITOCHONDRIAL"/>
    <property type="match status" value="1"/>
</dbReference>
<dbReference type="Pfam" id="PF00889">
    <property type="entry name" value="EF_TS"/>
    <property type="match status" value="1"/>
</dbReference>
<dbReference type="SUPFAM" id="SSF54713">
    <property type="entry name" value="Elongation factor Ts (EF-Ts), dimerisation domain"/>
    <property type="match status" value="2"/>
</dbReference>
<dbReference type="SUPFAM" id="SSF46934">
    <property type="entry name" value="UBA-like"/>
    <property type="match status" value="1"/>
</dbReference>
<dbReference type="PROSITE" id="PS01126">
    <property type="entry name" value="EF_TS_1"/>
    <property type="match status" value="1"/>
</dbReference>
<dbReference type="PROSITE" id="PS01127">
    <property type="entry name" value="EF_TS_2"/>
    <property type="match status" value="1"/>
</dbReference>
<reference key="1">
    <citation type="journal article" date="2008" name="Genome Biol.">
        <title>The complete genome, comparative and functional analysis of Stenotrophomonas maltophilia reveals an organism heavily shielded by drug resistance determinants.</title>
        <authorList>
            <person name="Crossman L.C."/>
            <person name="Gould V.C."/>
            <person name="Dow J.M."/>
            <person name="Vernikos G.S."/>
            <person name="Okazaki A."/>
            <person name="Sebaihia M."/>
            <person name="Saunders D."/>
            <person name="Arrowsmith C."/>
            <person name="Carver T."/>
            <person name="Peters N."/>
            <person name="Adlem E."/>
            <person name="Kerhornou A."/>
            <person name="Lord A."/>
            <person name="Murphy L."/>
            <person name="Seeger K."/>
            <person name="Squares R."/>
            <person name="Rutter S."/>
            <person name="Quail M.A."/>
            <person name="Rajandream M.A."/>
            <person name="Harris D."/>
            <person name="Churcher C."/>
            <person name="Bentley S.D."/>
            <person name="Parkhill J."/>
            <person name="Thomson N.R."/>
            <person name="Avison M.B."/>
        </authorList>
    </citation>
    <scope>NUCLEOTIDE SEQUENCE [LARGE SCALE GENOMIC DNA]</scope>
    <source>
        <strain>K279a</strain>
    </source>
</reference>
<name>EFTS_STRMK</name>